<evidence type="ECO:0000250" key="1"/>
<evidence type="ECO:0000256" key="2">
    <source>
        <dbReference type="SAM" id="MobiDB-lite"/>
    </source>
</evidence>
<evidence type="ECO:0000305" key="3"/>
<protein>
    <recommendedName>
        <fullName>Granule-bound starch synthase 1, chloroplastic/amyloplastic</fullName>
        <ecNumber>2.4.1.242</ecNumber>
    </recommendedName>
    <alternativeName>
        <fullName>Granule-bound starch synthase I</fullName>
        <shortName>GBSS-I</shortName>
    </alternativeName>
</protein>
<name>SSG1_MANES</name>
<gene>
    <name type="primary">WAXY</name>
    <name type="synonym">GBSS</name>
</gene>
<feature type="transit peptide" description="Chloroplast" evidence="1">
    <location>
        <begin position="1"/>
        <end position="78"/>
    </location>
</feature>
<feature type="chain" id="PRO_0000011130" description="Granule-bound starch synthase 1, chloroplastic/amyloplastic">
    <location>
        <begin position="79"/>
        <end position="608"/>
    </location>
</feature>
<feature type="region of interest" description="Disordered" evidence="2">
    <location>
        <begin position="587"/>
        <end position="608"/>
    </location>
</feature>
<feature type="binding site" evidence="1">
    <location>
        <position position="96"/>
    </location>
    <ligand>
        <name>ADP-alpha-D-glucose</name>
        <dbReference type="ChEBI" id="CHEBI:57498"/>
    </ligand>
</feature>
<organism>
    <name type="scientific">Manihot esculenta</name>
    <name type="common">Cassava</name>
    <name type="synonym">Jatropha manihot</name>
    <dbReference type="NCBI Taxonomy" id="3983"/>
    <lineage>
        <taxon>Eukaryota</taxon>
        <taxon>Viridiplantae</taxon>
        <taxon>Streptophyta</taxon>
        <taxon>Embryophyta</taxon>
        <taxon>Tracheophyta</taxon>
        <taxon>Spermatophyta</taxon>
        <taxon>Magnoliopsida</taxon>
        <taxon>eudicotyledons</taxon>
        <taxon>Gunneridae</taxon>
        <taxon>Pentapetalae</taxon>
        <taxon>rosids</taxon>
        <taxon>fabids</taxon>
        <taxon>Malpighiales</taxon>
        <taxon>Euphorbiaceae</taxon>
        <taxon>Crotonoideae</taxon>
        <taxon>Manihoteae</taxon>
        <taxon>Manihot</taxon>
    </lineage>
</organism>
<dbReference type="EC" id="2.4.1.242"/>
<dbReference type="EMBL" id="X74160">
    <property type="protein sequence ID" value="CAA52273.1"/>
    <property type="molecule type" value="mRNA"/>
</dbReference>
<dbReference type="PIR" id="S43341">
    <property type="entry name" value="S43341"/>
</dbReference>
<dbReference type="SMR" id="Q43784"/>
<dbReference type="CAZy" id="GT5">
    <property type="family name" value="Glycosyltransferase Family 5"/>
</dbReference>
<dbReference type="UniPathway" id="UPA00152"/>
<dbReference type="GO" id="GO:0009501">
    <property type="term" value="C:amyloplast"/>
    <property type="evidence" value="ECO:0007669"/>
    <property type="project" value="UniProtKB-SubCell"/>
</dbReference>
<dbReference type="GO" id="GO:0009507">
    <property type="term" value="C:chloroplast"/>
    <property type="evidence" value="ECO:0007669"/>
    <property type="project" value="UniProtKB-SubCell"/>
</dbReference>
<dbReference type="GO" id="GO:0004373">
    <property type="term" value="F:alpha-1,4-glucan glucosyltransferase (UDP-glucose donor) activity"/>
    <property type="evidence" value="ECO:0007669"/>
    <property type="project" value="InterPro"/>
</dbReference>
<dbReference type="GO" id="GO:0019252">
    <property type="term" value="P:starch biosynthetic process"/>
    <property type="evidence" value="ECO:0007669"/>
    <property type="project" value="UniProtKB-UniPathway"/>
</dbReference>
<dbReference type="CDD" id="cd03791">
    <property type="entry name" value="GT5_Glycogen_synthase_DULL1-like"/>
    <property type="match status" value="1"/>
</dbReference>
<dbReference type="FunFam" id="3.40.50.2000:FF:000073">
    <property type="entry name" value="Starch synthase, chloroplastic/amyloplastic"/>
    <property type="match status" value="1"/>
</dbReference>
<dbReference type="FunFam" id="3.40.50.2000:FF:000090">
    <property type="entry name" value="Starch synthase, chloroplastic/amyloplastic"/>
    <property type="match status" value="1"/>
</dbReference>
<dbReference type="Gene3D" id="3.40.50.2000">
    <property type="entry name" value="Glycogen Phosphorylase B"/>
    <property type="match status" value="2"/>
</dbReference>
<dbReference type="HAMAP" id="MF_00484">
    <property type="entry name" value="Glycogen_synth"/>
    <property type="match status" value="1"/>
</dbReference>
<dbReference type="InterPro" id="IPR001296">
    <property type="entry name" value="Glyco_trans_1"/>
</dbReference>
<dbReference type="InterPro" id="IPR011835">
    <property type="entry name" value="GS/SS"/>
</dbReference>
<dbReference type="InterPro" id="IPR013534">
    <property type="entry name" value="Starch_synth_cat_dom"/>
</dbReference>
<dbReference type="NCBIfam" id="TIGR02095">
    <property type="entry name" value="glgA"/>
    <property type="match status" value="1"/>
</dbReference>
<dbReference type="PANTHER" id="PTHR45825">
    <property type="entry name" value="GRANULE-BOUND STARCH SYNTHASE 1, CHLOROPLASTIC/AMYLOPLASTIC"/>
    <property type="match status" value="1"/>
</dbReference>
<dbReference type="PANTHER" id="PTHR45825:SF3">
    <property type="entry name" value="GRANULE-BOUND STARCH SYNTHASE 1, CHLOROPLASTIC_AMYLOPLASTIC"/>
    <property type="match status" value="1"/>
</dbReference>
<dbReference type="Pfam" id="PF08323">
    <property type="entry name" value="Glyco_transf_5"/>
    <property type="match status" value="1"/>
</dbReference>
<dbReference type="Pfam" id="PF00534">
    <property type="entry name" value="Glycos_transf_1"/>
    <property type="match status" value="1"/>
</dbReference>
<dbReference type="SUPFAM" id="SSF53756">
    <property type="entry name" value="UDP-Glycosyltransferase/glycogen phosphorylase"/>
    <property type="match status" value="1"/>
</dbReference>
<proteinExistence type="evidence at transcript level"/>
<accession>Q43784</accession>
<reference key="1">
    <citation type="journal article" date="1993" name="Plant Mol. Biol.">
        <title>Isolation and characterization of a cDNA encoding granule-bound starch synthase in cassava (Manihot esculenta Crantz) and its antisense expression in potato.</title>
        <authorList>
            <person name="Salehuzzaman S.N."/>
            <person name="Jacobsen E."/>
            <person name="Visser R.G.F."/>
        </authorList>
    </citation>
    <scope>NUCLEOTIDE SEQUENCE [MRNA]</scope>
    <source>
        <strain>cv. M.COL 22</strain>
        <tissue>Tuberous root</tissue>
    </source>
</reference>
<comment type="function">
    <text>Responsible for the synthesis of amylose in reserve starch.</text>
</comment>
<comment type="catalytic activity">
    <reaction>
        <text>an NDP-alpha-D-glucose + [(1-&gt;4)-alpha-D-glucosyl](n) = [(1-&gt;4)-alpha-D-glucosyl](n+1) + a ribonucleoside 5'-diphosphate + H(+)</text>
        <dbReference type="Rhea" id="RHEA:15873"/>
        <dbReference type="Rhea" id="RHEA-COMP:9584"/>
        <dbReference type="Rhea" id="RHEA-COMP:9587"/>
        <dbReference type="ChEBI" id="CHEBI:15378"/>
        <dbReference type="ChEBI" id="CHEBI:15444"/>
        <dbReference type="ChEBI" id="CHEBI:57930"/>
        <dbReference type="ChEBI" id="CHEBI:76533"/>
        <dbReference type="EC" id="2.4.1.242"/>
    </reaction>
</comment>
<comment type="pathway">
    <text>Glycan biosynthesis; starch biosynthesis.</text>
</comment>
<comment type="subcellular location">
    <subcellularLocation>
        <location>Plastid</location>
        <location>Chloroplast</location>
    </subcellularLocation>
    <subcellularLocation>
        <location>Plastid</location>
        <location>Amyloplast</location>
    </subcellularLocation>
    <text>Amyloplast or chloroplast, granule-bound.</text>
</comment>
<comment type="tissue specificity">
    <text>Synthesized in a number of different organs, but most abundantly in tubers.</text>
</comment>
<comment type="similarity">
    <text evidence="3">Belongs to the glycosyltransferase 1 family. Bacterial/plant glycogen synthase subfamily.</text>
</comment>
<sequence>MATVIAAHFVSRSSHLSIHALETKANNLSHTGPWTQTITPNGLRSLNTMDKLQMKTQSKAVKKVSATGNGRPAAKIICGHGMNLIFVGAEVGPWSKTGGLGDVLGGLPPAMAARGHRVMTVSPRYDQYKDAWDTSVSVEIKIGDRIETVRFFHSYKRGVDRVFVDHPMFLEKVWGKTGSKIYGPRAGLDYQDNQLRFSLLCLAALEAPRVLNLNSSKNFSGPYGEEVAFIANDWHTALLPCYLKAIYQPMGIYKHAKVAFCIHNIAYQGRFAFSDFPRLNLPDKFKSSFDFIDGYEKPVKGRKINWMKAGILESDRVLTVSPYYAQEVISGVERGVELDNFIRKTGIAGIINGMDVQEWNPVTDKYIDIHYDATTVMDAKPLLKEALQAEVGLPVDRNVPLIGFIGRLEEQKGSDIFVAAISQLVEHNVQIVILGTGKKKFEKQIEHLEVLYPDKARGVAKFNVPLAHMITAGADFMLVPSRFEPCGLIQLHAMRYGTVPIVASTGGLVDTVKEGYTGFQMGALHVECDKIDSADVAAIVKTVARALGTYATAALREMILNCMAQDLSWKGPARMWEKMLLDLEVTGSEPGTEGEEIAPLAKENVPTP</sequence>
<keyword id="KW-0035">Amyloplast</keyword>
<keyword id="KW-0150">Chloroplast</keyword>
<keyword id="KW-0328">Glycosyltransferase</keyword>
<keyword id="KW-0934">Plastid</keyword>
<keyword id="KW-0750">Starch biosynthesis</keyword>
<keyword id="KW-0808">Transferase</keyword>
<keyword id="KW-0809">Transit peptide</keyword>